<accession>P54735</accession>
<proteinExistence type="evidence at protein level"/>
<dbReference type="EC" id="2.7.11.1"/>
<dbReference type="EMBL" id="AB046600">
    <property type="protein sequence ID" value="BAB17036.1"/>
    <property type="molecule type" value="Genomic_DNA"/>
</dbReference>
<dbReference type="EMBL" id="BA000022">
    <property type="protein sequence ID" value="BAA10726.1"/>
    <property type="molecule type" value="Genomic_DNA"/>
</dbReference>
<dbReference type="PIR" id="S77034">
    <property type="entry name" value="S77034"/>
</dbReference>
<dbReference type="SMR" id="P54735"/>
<dbReference type="FunCoup" id="P54735">
    <property type="interactions" value="34"/>
</dbReference>
<dbReference type="IntAct" id="P54735">
    <property type="interactions" value="14"/>
</dbReference>
<dbReference type="STRING" id="1148.gene:10500230"/>
<dbReference type="PaxDb" id="1148-1006577"/>
<dbReference type="EnsemblBacteria" id="BAA10726">
    <property type="protein sequence ID" value="BAA10726"/>
    <property type="gene ID" value="BAA10726"/>
</dbReference>
<dbReference type="KEGG" id="syn:sll0776"/>
<dbReference type="eggNOG" id="COG0515">
    <property type="taxonomic scope" value="Bacteria"/>
</dbReference>
<dbReference type="eggNOG" id="COG3064">
    <property type="taxonomic scope" value="Bacteria"/>
</dbReference>
<dbReference type="eggNOG" id="COG4991">
    <property type="taxonomic scope" value="Bacteria"/>
</dbReference>
<dbReference type="InParanoid" id="P54735"/>
<dbReference type="PhylomeDB" id="P54735"/>
<dbReference type="BRENDA" id="2.7.11.1">
    <property type="organism ID" value="382"/>
</dbReference>
<dbReference type="Proteomes" id="UP000001425">
    <property type="component" value="Chromosome"/>
</dbReference>
<dbReference type="GO" id="GO:0005524">
    <property type="term" value="F:ATP binding"/>
    <property type="evidence" value="ECO:0007669"/>
    <property type="project" value="UniProtKB-KW"/>
</dbReference>
<dbReference type="GO" id="GO:0106310">
    <property type="term" value="F:protein serine kinase activity"/>
    <property type="evidence" value="ECO:0007669"/>
    <property type="project" value="RHEA"/>
</dbReference>
<dbReference type="GO" id="GO:0004674">
    <property type="term" value="F:protein serine/threonine kinase activity"/>
    <property type="evidence" value="ECO:0000318"/>
    <property type="project" value="GO_Central"/>
</dbReference>
<dbReference type="CDD" id="cd14014">
    <property type="entry name" value="STKc_PknB_like"/>
    <property type="match status" value="1"/>
</dbReference>
<dbReference type="Gene3D" id="2.30.30.40">
    <property type="entry name" value="SH3 Domains"/>
    <property type="match status" value="1"/>
</dbReference>
<dbReference type="Gene3D" id="1.10.510.10">
    <property type="entry name" value="Transferase(Phosphotransferase) domain 1"/>
    <property type="match status" value="1"/>
</dbReference>
<dbReference type="InterPro" id="IPR011009">
    <property type="entry name" value="Kinase-like_dom_sf"/>
</dbReference>
<dbReference type="InterPro" id="IPR000719">
    <property type="entry name" value="Prot_kinase_dom"/>
</dbReference>
<dbReference type="InterPro" id="IPR017441">
    <property type="entry name" value="Protein_kinase_ATP_BS"/>
</dbReference>
<dbReference type="InterPro" id="IPR008271">
    <property type="entry name" value="Ser/Thr_kinase_AS"/>
</dbReference>
<dbReference type="InterPro" id="IPR003646">
    <property type="entry name" value="SH3-like_bac-type"/>
</dbReference>
<dbReference type="PANTHER" id="PTHR24363">
    <property type="entry name" value="SERINE/THREONINE PROTEIN KINASE"/>
    <property type="match status" value="1"/>
</dbReference>
<dbReference type="PANTHER" id="PTHR24363:SF0">
    <property type="entry name" value="SERINE_THREONINE KINASE LIKE DOMAIN CONTAINING 1"/>
    <property type="match status" value="1"/>
</dbReference>
<dbReference type="Pfam" id="PF00069">
    <property type="entry name" value="Pkinase"/>
    <property type="match status" value="1"/>
</dbReference>
<dbReference type="Pfam" id="PF08239">
    <property type="entry name" value="SH3_3"/>
    <property type="match status" value="1"/>
</dbReference>
<dbReference type="SMART" id="SM00220">
    <property type="entry name" value="S_TKc"/>
    <property type="match status" value="1"/>
</dbReference>
<dbReference type="SMART" id="SM00287">
    <property type="entry name" value="SH3b"/>
    <property type="match status" value="1"/>
</dbReference>
<dbReference type="SUPFAM" id="SSF56112">
    <property type="entry name" value="Protein kinase-like (PK-like)"/>
    <property type="match status" value="1"/>
</dbReference>
<dbReference type="PROSITE" id="PS00107">
    <property type="entry name" value="PROTEIN_KINASE_ATP"/>
    <property type="match status" value="1"/>
</dbReference>
<dbReference type="PROSITE" id="PS50011">
    <property type="entry name" value="PROTEIN_KINASE_DOM"/>
    <property type="match status" value="1"/>
</dbReference>
<dbReference type="PROSITE" id="PS00108">
    <property type="entry name" value="PROTEIN_KINASE_ST"/>
    <property type="match status" value="1"/>
</dbReference>
<dbReference type="PROSITE" id="PS51781">
    <property type="entry name" value="SH3B"/>
    <property type="match status" value="1"/>
</dbReference>
<feature type="chain" id="PRO_0000171242" description="Serine/threonine-protein kinase D">
    <location>
        <begin position="1"/>
        <end position="505"/>
    </location>
</feature>
<feature type="domain" description="Protein kinase" evidence="1">
    <location>
        <begin position="9"/>
        <end position="271"/>
    </location>
</feature>
<feature type="domain" description="SH3b" evidence="2">
    <location>
        <begin position="436"/>
        <end position="505"/>
    </location>
</feature>
<feature type="active site" description="Proton acceptor" evidence="1 3">
    <location>
        <position position="136"/>
    </location>
</feature>
<feature type="binding site" evidence="1">
    <location>
        <begin position="15"/>
        <end position="23"/>
    </location>
    <ligand>
        <name>ATP</name>
        <dbReference type="ChEBI" id="CHEBI:30616"/>
    </ligand>
</feature>
<feature type="binding site" evidence="1">
    <location>
        <position position="40"/>
    </location>
    <ligand>
        <name>ATP</name>
        <dbReference type="ChEBI" id="CHEBI:30616"/>
    </ligand>
</feature>
<organism>
    <name type="scientific">Synechocystis sp. (strain ATCC 27184 / PCC 6803 / Kazusa)</name>
    <dbReference type="NCBI Taxonomy" id="1111708"/>
    <lineage>
        <taxon>Bacteria</taxon>
        <taxon>Bacillati</taxon>
        <taxon>Cyanobacteriota</taxon>
        <taxon>Cyanophyceae</taxon>
        <taxon>Synechococcales</taxon>
        <taxon>Merismopediaceae</taxon>
        <taxon>Synechocystis</taxon>
    </lineage>
</organism>
<sequence length="505" mass="55213">MNVQVLDRYEIVKSLGSGGFGDTFLAKDTQIPSQKLVVIKRLKPANANSNTSTELIQKLFEKEASVLEDLGEHNSQIPKLYSYFSNDNEFYLVQEYIQGVSLNEIAPISSEQAKTILSSLLTTLKYIHSKGIIHRDIKPENIILRDSDHLPVLIDFGAVKETMGAVTLGSGSTVSSVVIGTRGFMAPEQSSGRSVFSTDLYALGLTIIYTLTKKLPVEFSSDQQTGQLDWQSHVSKIDSVLAKVINKAIEMEPSRRYSSAEAMYQALHSLISSGAEPALPMETVRVAPSNEFLVTRSSTKTAETVVKPVGNSHNNYSNNNGKSKIATLLTVLIGIIVVTAGLGGGFIITQQIKEAEARAAQAEKEKQEAEQKRIEAEQKIAENEKRQRELEQKRVEEERQRLAAEAERAKQERQRLAAERQRVQVLANQAKAMASGASATIGGIPGSKNIRSGPGTDYGVITQGYTGEGLDILDSSTDSSGHVWYKVYHYGSGSTGWIASQLVNF</sequence>
<name>SPKD_SYNY3</name>
<reference key="1">
    <citation type="journal article" date="2002" name="DNA Res.">
        <title>Biochemical examination of the potential eukaryotic-type protein kinase genes in the complete genome of the unicellular Cyanobacterium synechocystis sp. PCC 6803.</title>
        <authorList>
            <person name="Kamei A."/>
            <person name="Yuasa T."/>
            <person name="Geng X."/>
            <person name="Ikeuchi M."/>
        </authorList>
    </citation>
    <scope>NUCLEOTIDE SEQUENCE [GENOMIC DNA]</scope>
    <scope>CHARACTERIZATION</scope>
</reference>
<reference key="2">
    <citation type="journal article" date="1995" name="DNA Res.">
        <title>Sequence analysis of the genome of the unicellular cyanobacterium Synechocystis sp. strain PCC6803. I. Sequence features in the 1 Mb region from map positions 64% to 92% of the genome.</title>
        <authorList>
            <person name="Kaneko T."/>
            <person name="Tanaka A."/>
            <person name="Sato S."/>
            <person name="Kotani H."/>
            <person name="Sazuka T."/>
            <person name="Miyajima N."/>
            <person name="Sugiura M."/>
            <person name="Tabata S."/>
        </authorList>
    </citation>
    <scope>NUCLEOTIDE SEQUENCE [LARGE SCALE GENOMIC DNA]</scope>
    <source>
        <strain>ATCC 27184 / PCC 6803 / N-1</strain>
    </source>
</reference>
<reference key="3">
    <citation type="journal article" date="1996" name="DNA Res.">
        <title>Sequence analysis of the genome of the unicellular cyanobacterium Synechocystis sp. strain PCC6803. II. Sequence determination of the entire genome and assignment of potential protein-coding regions.</title>
        <authorList>
            <person name="Kaneko T."/>
            <person name="Sato S."/>
            <person name="Kotani H."/>
            <person name="Tanaka A."/>
            <person name="Asamizu E."/>
            <person name="Nakamura Y."/>
            <person name="Miyajima N."/>
            <person name="Hirosawa M."/>
            <person name="Sugiura M."/>
            <person name="Sasamoto S."/>
            <person name="Kimura T."/>
            <person name="Hosouchi T."/>
            <person name="Matsuno A."/>
            <person name="Muraki A."/>
            <person name="Nakazaki N."/>
            <person name="Naruo K."/>
            <person name="Okumura S."/>
            <person name="Shimpo S."/>
            <person name="Takeuchi C."/>
            <person name="Wada T."/>
            <person name="Watanabe A."/>
            <person name="Yamada M."/>
            <person name="Yasuda M."/>
            <person name="Tabata S."/>
        </authorList>
    </citation>
    <scope>NUCLEOTIDE SEQUENCE [LARGE SCALE GENOMIC DNA]</scope>
    <source>
        <strain>ATCC 27184 / PCC 6803 / Kazusa</strain>
    </source>
</reference>
<gene>
    <name type="primary">spkD</name>
    <name type="ordered locus">sll0776</name>
</gene>
<protein>
    <recommendedName>
        <fullName>Serine/threonine-protein kinase D</fullName>
        <ecNumber>2.7.11.1</ecNumber>
    </recommendedName>
</protein>
<keyword id="KW-0067">ATP-binding</keyword>
<keyword id="KW-0418">Kinase</keyword>
<keyword id="KW-0547">Nucleotide-binding</keyword>
<keyword id="KW-1185">Reference proteome</keyword>
<keyword id="KW-0723">Serine/threonine-protein kinase</keyword>
<keyword id="KW-0808">Transferase</keyword>
<comment type="catalytic activity">
    <reaction>
        <text>L-seryl-[protein] + ATP = O-phospho-L-seryl-[protein] + ADP + H(+)</text>
        <dbReference type="Rhea" id="RHEA:17989"/>
        <dbReference type="Rhea" id="RHEA-COMP:9863"/>
        <dbReference type="Rhea" id="RHEA-COMP:11604"/>
        <dbReference type="ChEBI" id="CHEBI:15378"/>
        <dbReference type="ChEBI" id="CHEBI:29999"/>
        <dbReference type="ChEBI" id="CHEBI:30616"/>
        <dbReference type="ChEBI" id="CHEBI:83421"/>
        <dbReference type="ChEBI" id="CHEBI:456216"/>
        <dbReference type="EC" id="2.7.11.1"/>
    </reaction>
</comment>
<comment type="catalytic activity">
    <reaction>
        <text>L-threonyl-[protein] + ATP = O-phospho-L-threonyl-[protein] + ADP + H(+)</text>
        <dbReference type="Rhea" id="RHEA:46608"/>
        <dbReference type="Rhea" id="RHEA-COMP:11060"/>
        <dbReference type="Rhea" id="RHEA-COMP:11605"/>
        <dbReference type="ChEBI" id="CHEBI:15378"/>
        <dbReference type="ChEBI" id="CHEBI:30013"/>
        <dbReference type="ChEBI" id="CHEBI:30616"/>
        <dbReference type="ChEBI" id="CHEBI:61977"/>
        <dbReference type="ChEBI" id="CHEBI:456216"/>
        <dbReference type="EC" id="2.7.11.1"/>
    </reaction>
</comment>
<comment type="similarity">
    <text evidence="1">Belongs to the protein kinase superfamily. Ser/Thr protein kinase family.</text>
</comment>
<evidence type="ECO:0000255" key="1">
    <source>
        <dbReference type="PROSITE-ProRule" id="PRU00159"/>
    </source>
</evidence>
<evidence type="ECO:0000255" key="2">
    <source>
        <dbReference type="PROSITE-ProRule" id="PRU01117"/>
    </source>
</evidence>
<evidence type="ECO:0000255" key="3">
    <source>
        <dbReference type="PROSITE-ProRule" id="PRU10027"/>
    </source>
</evidence>